<comment type="function">
    <text evidence="1">Catalyzes the attachment of glycine to tRNA(Gly).</text>
</comment>
<comment type="catalytic activity">
    <reaction evidence="1">
        <text>tRNA(Gly) + glycine + ATP = glycyl-tRNA(Gly) + AMP + diphosphate</text>
        <dbReference type="Rhea" id="RHEA:16013"/>
        <dbReference type="Rhea" id="RHEA-COMP:9664"/>
        <dbReference type="Rhea" id="RHEA-COMP:9683"/>
        <dbReference type="ChEBI" id="CHEBI:30616"/>
        <dbReference type="ChEBI" id="CHEBI:33019"/>
        <dbReference type="ChEBI" id="CHEBI:57305"/>
        <dbReference type="ChEBI" id="CHEBI:78442"/>
        <dbReference type="ChEBI" id="CHEBI:78522"/>
        <dbReference type="ChEBI" id="CHEBI:456215"/>
        <dbReference type="EC" id="6.1.1.14"/>
    </reaction>
</comment>
<comment type="subunit">
    <text evidence="1">Homodimer.</text>
</comment>
<comment type="subcellular location">
    <subcellularLocation>
        <location evidence="1">Cytoplasm</location>
    </subcellularLocation>
</comment>
<comment type="similarity">
    <text evidence="1">Belongs to the class-II aminoacyl-tRNA synthetase family.</text>
</comment>
<proteinExistence type="inferred from homology"/>
<feature type="chain" id="PRO_0000072960" description="Glycine--tRNA ligase">
    <location>
        <begin position="1"/>
        <end position="464"/>
    </location>
</feature>
<feature type="binding site" evidence="1">
    <location>
        <position position="104"/>
    </location>
    <ligand>
        <name>substrate</name>
    </ligand>
</feature>
<feature type="binding site" evidence="1">
    <location>
        <position position="175"/>
    </location>
    <ligand>
        <name>substrate</name>
    </ligand>
</feature>
<feature type="binding site" evidence="1">
    <location>
        <begin position="207"/>
        <end position="209"/>
    </location>
    <ligand>
        <name>ATP</name>
        <dbReference type="ChEBI" id="CHEBI:30616"/>
    </ligand>
</feature>
<feature type="binding site" evidence="1">
    <location>
        <begin position="217"/>
        <end position="222"/>
    </location>
    <ligand>
        <name>ATP</name>
        <dbReference type="ChEBI" id="CHEBI:30616"/>
    </ligand>
</feature>
<feature type="binding site" evidence="1">
    <location>
        <begin position="222"/>
        <end position="226"/>
    </location>
    <ligand>
        <name>substrate</name>
    </ligand>
</feature>
<feature type="binding site" evidence="1">
    <location>
        <begin position="292"/>
        <end position="293"/>
    </location>
    <ligand>
        <name>ATP</name>
        <dbReference type="ChEBI" id="CHEBI:30616"/>
    </ligand>
</feature>
<feature type="binding site" evidence="1">
    <location>
        <begin position="332"/>
        <end position="336"/>
    </location>
    <ligand>
        <name>substrate</name>
    </ligand>
</feature>
<feature type="binding site" evidence="1">
    <location>
        <begin position="336"/>
        <end position="339"/>
    </location>
    <ligand>
        <name>ATP</name>
        <dbReference type="ChEBI" id="CHEBI:30616"/>
    </ligand>
</feature>
<accession>Q8F6C0</accession>
<evidence type="ECO:0000255" key="1">
    <source>
        <dbReference type="HAMAP-Rule" id="MF_00253"/>
    </source>
</evidence>
<organism>
    <name type="scientific">Leptospira interrogans serogroup Icterohaemorrhagiae serovar Lai (strain 56601)</name>
    <dbReference type="NCBI Taxonomy" id="189518"/>
    <lineage>
        <taxon>Bacteria</taxon>
        <taxon>Pseudomonadati</taxon>
        <taxon>Spirochaetota</taxon>
        <taxon>Spirochaetia</taxon>
        <taxon>Leptospirales</taxon>
        <taxon>Leptospiraceae</taxon>
        <taxon>Leptospira</taxon>
    </lineage>
</organism>
<name>SYG_LEPIN</name>
<dbReference type="EC" id="6.1.1.14" evidence="1"/>
<dbReference type="EMBL" id="AE010300">
    <property type="protein sequence ID" value="AAN48587.1"/>
    <property type="molecule type" value="Genomic_DNA"/>
</dbReference>
<dbReference type="RefSeq" id="NP_711569.1">
    <property type="nucleotide sequence ID" value="NC_004342.2"/>
</dbReference>
<dbReference type="RefSeq" id="WP_000412099.1">
    <property type="nucleotide sequence ID" value="NC_004342.2"/>
</dbReference>
<dbReference type="SMR" id="Q8F6C0"/>
<dbReference type="STRING" id="189518.LA_1388"/>
<dbReference type="PaxDb" id="189518-LA_1388"/>
<dbReference type="EnsemblBacteria" id="AAN48587">
    <property type="protein sequence ID" value="AAN48587"/>
    <property type="gene ID" value="LA_1388"/>
</dbReference>
<dbReference type="KEGG" id="lil:LA_1388"/>
<dbReference type="PATRIC" id="fig|189518.3.peg.1383"/>
<dbReference type="HOGENOM" id="CLU_015515_2_1_12"/>
<dbReference type="InParanoid" id="Q8F6C0"/>
<dbReference type="OrthoDB" id="9760853at2"/>
<dbReference type="Proteomes" id="UP000001408">
    <property type="component" value="Chromosome I"/>
</dbReference>
<dbReference type="GO" id="GO:0005737">
    <property type="term" value="C:cytoplasm"/>
    <property type="evidence" value="ECO:0000318"/>
    <property type="project" value="GO_Central"/>
</dbReference>
<dbReference type="GO" id="GO:0005524">
    <property type="term" value="F:ATP binding"/>
    <property type="evidence" value="ECO:0007669"/>
    <property type="project" value="UniProtKB-UniRule"/>
</dbReference>
<dbReference type="GO" id="GO:0004820">
    <property type="term" value="F:glycine-tRNA ligase activity"/>
    <property type="evidence" value="ECO:0000250"/>
    <property type="project" value="UniProtKB"/>
</dbReference>
<dbReference type="GO" id="GO:0046983">
    <property type="term" value="F:protein dimerization activity"/>
    <property type="evidence" value="ECO:0000250"/>
    <property type="project" value="UniProtKB"/>
</dbReference>
<dbReference type="GO" id="GO:0006426">
    <property type="term" value="P:glycyl-tRNA aminoacylation"/>
    <property type="evidence" value="ECO:0000318"/>
    <property type="project" value="GO_Central"/>
</dbReference>
<dbReference type="CDD" id="cd00774">
    <property type="entry name" value="GlyRS-like_core"/>
    <property type="match status" value="1"/>
</dbReference>
<dbReference type="CDD" id="cd00858">
    <property type="entry name" value="GlyRS_anticodon"/>
    <property type="match status" value="1"/>
</dbReference>
<dbReference type="FunFam" id="3.40.50.800:FF:000002">
    <property type="entry name" value="Glycine--tRNA ligase"/>
    <property type="match status" value="1"/>
</dbReference>
<dbReference type="Gene3D" id="3.40.50.800">
    <property type="entry name" value="Anticodon-binding domain"/>
    <property type="match status" value="1"/>
</dbReference>
<dbReference type="Gene3D" id="3.30.930.10">
    <property type="entry name" value="Bira Bifunctional Protein, Domain 2"/>
    <property type="match status" value="1"/>
</dbReference>
<dbReference type="HAMAP" id="MF_00253_B">
    <property type="entry name" value="Gly_tRNA_synth_B"/>
    <property type="match status" value="1"/>
</dbReference>
<dbReference type="InterPro" id="IPR002314">
    <property type="entry name" value="aa-tRNA-synt_IIb"/>
</dbReference>
<dbReference type="InterPro" id="IPR006195">
    <property type="entry name" value="aa-tRNA-synth_II"/>
</dbReference>
<dbReference type="InterPro" id="IPR045864">
    <property type="entry name" value="aa-tRNA-synth_II/BPL/LPL"/>
</dbReference>
<dbReference type="InterPro" id="IPR004154">
    <property type="entry name" value="Anticodon-bd"/>
</dbReference>
<dbReference type="InterPro" id="IPR036621">
    <property type="entry name" value="Anticodon-bd_dom_sf"/>
</dbReference>
<dbReference type="InterPro" id="IPR027031">
    <property type="entry name" value="Gly-tRNA_synthase/POLG2"/>
</dbReference>
<dbReference type="InterPro" id="IPR022961">
    <property type="entry name" value="Gly_tRNA_ligase_bac"/>
</dbReference>
<dbReference type="InterPro" id="IPR033731">
    <property type="entry name" value="GlyRS-like_core"/>
</dbReference>
<dbReference type="InterPro" id="IPR002315">
    <property type="entry name" value="tRNA-synt_gly"/>
</dbReference>
<dbReference type="NCBIfam" id="TIGR00389">
    <property type="entry name" value="glyS_dimeric"/>
    <property type="match status" value="1"/>
</dbReference>
<dbReference type="NCBIfam" id="NF003211">
    <property type="entry name" value="PRK04173.1"/>
    <property type="match status" value="1"/>
</dbReference>
<dbReference type="PANTHER" id="PTHR10745:SF8">
    <property type="entry name" value="DNA POLYMERASE SUBUNIT GAMMA-2, MITOCHONDRIAL"/>
    <property type="match status" value="1"/>
</dbReference>
<dbReference type="PANTHER" id="PTHR10745">
    <property type="entry name" value="GLYCYL-TRNA SYNTHETASE/DNA POLYMERASE SUBUNIT GAMMA-2"/>
    <property type="match status" value="1"/>
</dbReference>
<dbReference type="Pfam" id="PF03129">
    <property type="entry name" value="HGTP_anticodon"/>
    <property type="match status" value="1"/>
</dbReference>
<dbReference type="Pfam" id="PF00587">
    <property type="entry name" value="tRNA-synt_2b"/>
    <property type="match status" value="1"/>
</dbReference>
<dbReference type="PRINTS" id="PR01043">
    <property type="entry name" value="TRNASYNTHGLY"/>
</dbReference>
<dbReference type="SUPFAM" id="SSF52954">
    <property type="entry name" value="Class II aaRS ABD-related"/>
    <property type="match status" value="1"/>
</dbReference>
<dbReference type="SUPFAM" id="SSF55681">
    <property type="entry name" value="Class II aaRS and biotin synthetases"/>
    <property type="match status" value="1"/>
</dbReference>
<dbReference type="PROSITE" id="PS50862">
    <property type="entry name" value="AA_TRNA_LIGASE_II"/>
    <property type="match status" value="1"/>
</dbReference>
<protein>
    <recommendedName>
        <fullName evidence="1">Glycine--tRNA ligase</fullName>
        <ecNumber evidence="1">6.1.1.14</ecNumber>
    </recommendedName>
    <alternativeName>
        <fullName evidence="1">Glycyl-tRNA synthetase</fullName>
        <shortName evidence="1">GlyRS</shortName>
    </alternativeName>
</protein>
<gene>
    <name evidence="1" type="primary">glyQS</name>
    <name type="synonym">glyS</name>
    <name type="ordered locus">LA_1388</name>
</gene>
<sequence length="464" mass="53786">MEKKESLDSSLKEIVSVCKRRGFVYPGSEIYGGLSNTFDYGPYGVELLQNLKQLWWKYFVHLREDIVGLDSSILLNPKVWEASGHVSNFNDPLIDCKNCKTRIRADKFLEDQKGEGFATGLTLEKMNQVIKESNFACPNCGQRGTFTEARDFNLMFKTSHGASAEDSLDIYLRPETAQGIFLNFKNVVSTTRRKIPFGIAQIGKSFRNEIMARQFVFRTREFEQMEMEFFCEPGTQKEWFSHWVNYCMNWLTEQVGIKKENLRVREHEKEELSFYSEGTSDIEFKYNFGWGELWGIASRTDYDLNQHQKFSGEDLKYQDQVQNKKYVPFVVEPALGVNRLFLAVVTDAYEEEKLPDGETRTVLRFSPKIAPVKAAIFPLMKKDGLPEKSREIFADLSKLGNIEYDDGGAIGKRYRRQDEIGTPFCITVDYDTLKDDTVTVRERDSMSQERIAVNQLKNWLFERL</sequence>
<reference key="1">
    <citation type="journal article" date="2003" name="Nature">
        <title>Unique physiological and pathogenic features of Leptospira interrogans revealed by whole-genome sequencing.</title>
        <authorList>
            <person name="Ren S.-X."/>
            <person name="Fu G."/>
            <person name="Jiang X.-G."/>
            <person name="Zeng R."/>
            <person name="Miao Y.-G."/>
            <person name="Xu H."/>
            <person name="Zhang Y.-X."/>
            <person name="Xiong H."/>
            <person name="Lu G."/>
            <person name="Lu L.-F."/>
            <person name="Jiang H.-Q."/>
            <person name="Jia J."/>
            <person name="Tu Y.-F."/>
            <person name="Jiang J.-X."/>
            <person name="Gu W.-Y."/>
            <person name="Zhang Y.-Q."/>
            <person name="Cai Z."/>
            <person name="Sheng H.-H."/>
            <person name="Yin H.-F."/>
            <person name="Zhang Y."/>
            <person name="Zhu G.-F."/>
            <person name="Wan M."/>
            <person name="Huang H.-L."/>
            <person name="Qian Z."/>
            <person name="Wang S.-Y."/>
            <person name="Ma W."/>
            <person name="Yao Z.-J."/>
            <person name="Shen Y."/>
            <person name="Qiang B.-Q."/>
            <person name="Xia Q.-C."/>
            <person name="Guo X.-K."/>
            <person name="Danchin A."/>
            <person name="Saint Girons I."/>
            <person name="Somerville R.L."/>
            <person name="Wen Y.-M."/>
            <person name="Shi M.-H."/>
            <person name="Chen Z."/>
            <person name="Xu J.-G."/>
            <person name="Zhao G.-P."/>
        </authorList>
    </citation>
    <scope>NUCLEOTIDE SEQUENCE [LARGE SCALE GENOMIC DNA]</scope>
    <source>
        <strain>56601</strain>
    </source>
</reference>
<keyword id="KW-0030">Aminoacyl-tRNA synthetase</keyword>
<keyword id="KW-0067">ATP-binding</keyword>
<keyword id="KW-0963">Cytoplasm</keyword>
<keyword id="KW-0436">Ligase</keyword>
<keyword id="KW-0547">Nucleotide-binding</keyword>
<keyword id="KW-0648">Protein biosynthesis</keyword>
<keyword id="KW-1185">Reference proteome</keyword>